<gene>
    <name evidence="1" type="primary">msbA</name>
    <name type="ordered locus">SYNAS_22440</name>
    <name type="ORF">SYN_01564</name>
</gene>
<name>MSBA_SYNAS</name>
<dbReference type="EC" id="7.5.2.6" evidence="1"/>
<dbReference type="EMBL" id="CP000252">
    <property type="protein sequence ID" value="ABC78123.1"/>
    <property type="molecule type" value="Genomic_DNA"/>
</dbReference>
<dbReference type="SMR" id="Q2LVL0"/>
<dbReference type="FunCoup" id="Q2LVL0">
    <property type="interactions" value="350"/>
</dbReference>
<dbReference type="STRING" id="56780.SYN_01564"/>
<dbReference type="KEGG" id="sat:SYN_01564"/>
<dbReference type="eggNOG" id="COG1132">
    <property type="taxonomic scope" value="Bacteria"/>
</dbReference>
<dbReference type="HOGENOM" id="CLU_000604_84_3_7"/>
<dbReference type="InParanoid" id="Q2LVL0"/>
<dbReference type="OrthoDB" id="9772049at2"/>
<dbReference type="Proteomes" id="UP000001933">
    <property type="component" value="Chromosome"/>
</dbReference>
<dbReference type="GO" id="GO:0005886">
    <property type="term" value="C:plasma membrane"/>
    <property type="evidence" value="ECO:0007669"/>
    <property type="project" value="UniProtKB-SubCell"/>
</dbReference>
<dbReference type="GO" id="GO:0015421">
    <property type="term" value="F:ABC-type oligopeptide transporter activity"/>
    <property type="evidence" value="ECO:0007669"/>
    <property type="project" value="TreeGrafter"/>
</dbReference>
<dbReference type="GO" id="GO:0005524">
    <property type="term" value="F:ATP binding"/>
    <property type="evidence" value="ECO:0007669"/>
    <property type="project" value="UniProtKB-KW"/>
</dbReference>
<dbReference type="GO" id="GO:0016887">
    <property type="term" value="F:ATP hydrolysis activity"/>
    <property type="evidence" value="ECO:0007669"/>
    <property type="project" value="InterPro"/>
</dbReference>
<dbReference type="GO" id="GO:0034040">
    <property type="term" value="F:ATPase-coupled lipid transmembrane transporter activity"/>
    <property type="evidence" value="ECO:0007669"/>
    <property type="project" value="InterPro"/>
</dbReference>
<dbReference type="CDD" id="cd18552">
    <property type="entry name" value="ABC_6TM_MsbA_like"/>
    <property type="match status" value="1"/>
</dbReference>
<dbReference type="CDD" id="cd03251">
    <property type="entry name" value="ABCC_MsbA"/>
    <property type="match status" value="1"/>
</dbReference>
<dbReference type="FunFam" id="3.40.50.300:FF:000287">
    <property type="entry name" value="Multidrug ABC transporter ATP-binding protein"/>
    <property type="match status" value="1"/>
</dbReference>
<dbReference type="Gene3D" id="1.20.1560.10">
    <property type="entry name" value="ABC transporter type 1, transmembrane domain"/>
    <property type="match status" value="1"/>
</dbReference>
<dbReference type="Gene3D" id="3.40.50.300">
    <property type="entry name" value="P-loop containing nucleotide triphosphate hydrolases"/>
    <property type="match status" value="1"/>
</dbReference>
<dbReference type="InterPro" id="IPR003593">
    <property type="entry name" value="AAA+_ATPase"/>
</dbReference>
<dbReference type="InterPro" id="IPR011527">
    <property type="entry name" value="ABC1_TM_dom"/>
</dbReference>
<dbReference type="InterPro" id="IPR036640">
    <property type="entry name" value="ABC1_TM_sf"/>
</dbReference>
<dbReference type="InterPro" id="IPR003439">
    <property type="entry name" value="ABC_transporter-like_ATP-bd"/>
</dbReference>
<dbReference type="InterPro" id="IPR017871">
    <property type="entry name" value="ABC_transporter-like_CS"/>
</dbReference>
<dbReference type="InterPro" id="IPR011917">
    <property type="entry name" value="ABC_transpr_lipidA"/>
</dbReference>
<dbReference type="InterPro" id="IPR027417">
    <property type="entry name" value="P-loop_NTPase"/>
</dbReference>
<dbReference type="InterPro" id="IPR039421">
    <property type="entry name" value="Type_1_exporter"/>
</dbReference>
<dbReference type="NCBIfam" id="TIGR02203">
    <property type="entry name" value="MsbA_lipidA"/>
    <property type="match status" value="1"/>
</dbReference>
<dbReference type="PANTHER" id="PTHR43394:SF1">
    <property type="entry name" value="ATP-BINDING CASSETTE SUB-FAMILY B MEMBER 10, MITOCHONDRIAL"/>
    <property type="match status" value="1"/>
</dbReference>
<dbReference type="PANTHER" id="PTHR43394">
    <property type="entry name" value="ATP-DEPENDENT PERMEASE MDL1, MITOCHONDRIAL"/>
    <property type="match status" value="1"/>
</dbReference>
<dbReference type="Pfam" id="PF00664">
    <property type="entry name" value="ABC_membrane"/>
    <property type="match status" value="1"/>
</dbReference>
<dbReference type="Pfam" id="PF00005">
    <property type="entry name" value="ABC_tran"/>
    <property type="match status" value="1"/>
</dbReference>
<dbReference type="SMART" id="SM00382">
    <property type="entry name" value="AAA"/>
    <property type="match status" value="1"/>
</dbReference>
<dbReference type="SUPFAM" id="SSF90123">
    <property type="entry name" value="ABC transporter transmembrane region"/>
    <property type="match status" value="1"/>
</dbReference>
<dbReference type="SUPFAM" id="SSF52540">
    <property type="entry name" value="P-loop containing nucleoside triphosphate hydrolases"/>
    <property type="match status" value="1"/>
</dbReference>
<dbReference type="PROSITE" id="PS50929">
    <property type="entry name" value="ABC_TM1F"/>
    <property type="match status" value="1"/>
</dbReference>
<dbReference type="PROSITE" id="PS00211">
    <property type="entry name" value="ABC_TRANSPORTER_1"/>
    <property type="match status" value="1"/>
</dbReference>
<dbReference type="PROSITE" id="PS50893">
    <property type="entry name" value="ABC_TRANSPORTER_2"/>
    <property type="match status" value="1"/>
</dbReference>
<dbReference type="PROSITE" id="PS51239">
    <property type="entry name" value="MSBA"/>
    <property type="match status" value="1"/>
</dbReference>
<organism>
    <name type="scientific">Syntrophus aciditrophicus (strain SB)</name>
    <dbReference type="NCBI Taxonomy" id="56780"/>
    <lineage>
        <taxon>Bacteria</taxon>
        <taxon>Pseudomonadati</taxon>
        <taxon>Thermodesulfobacteriota</taxon>
        <taxon>Syntrophia</taxon>
        <taxon>Syntrophales</taxon>
        <taxon>Syntrophaceae</taxon>
        <taxon>Syntrophus</taxon>
    </lineage>
</organism>
<comment type="function">
    <text evidence="1">Involved in lipopolysaccharide (LPS) biosynthesis. Translocates lipid A-core from the inner to the outer leaflet of the inner membrane. Transmembrane domains (TMD) form a pore in the inner membrane and the ATP-binding domain (NBD) is responsible for energy generation.</text>
</comment>
<comment type="catalytic activity">
    <reaction evidence="1">
        <text>ATP + H2O + lipid A-core oligosaccharideSide 1 = ADP + phosphate + lipid A-core oligosaccharideSide 2.</text>
        <dbReference type="EC" id="7.5.2.6"/>
    </reaction>
</comment>
<comment type="subunit">
    <text evidence="1">Homodimer.</text>
</comment>
<comment type="subcellular location">
    <subcellularLocation>
        <location evidence="1">Cell inner membrane</location>
        <topology evidence="1">Multi-pass membrane protein</topology>
    </subcellularLocation>
</comment>
<comment type="domain">
    <text evidence="1">In MsbA the ATP-binding domain (NBD) and the transmembrane domain (TMD) are fused.</text>
</comment>
<comment type="similarity">
    <text evidence="1">Belongs to the ABC transporter superfamily. Lipid exporter (TC 3.A.1.106) family.</text>
</comment>
<protein>
    <recommendedName>
        <fullName evidence="1">ATP-dependent lipid A-core flippase</fullName>
        <ecNumber evidence="1">7.5.2.6</ecNumber>
    </recommendedName>
    <alternativeName>
        <fullName evidence="1">Lipid A export ATP-binding/permease protein MsbA</fullName>
    </alternativeName>
</protein>
<sequence length="601" mass="66909">MAGNRGCKPRRFEGNQRMDIFKRLLKLARPHAPRFAVAMVCMLIAGALTSSLAFLVKPALDDIFLDRNAEMLKWIPLAIILIYLVKGGCSYFQAILMSFIGQRIVADLRNRLYEQIQKQSLSFFSKNPTGVLMSRITNDVNSIQGTVSDAVTSLMKDSFTLICLVFVIFYRDWQLAIIAMIVFPLTIYPIAKFGQKMRSVATRTQVTMGSLTTLLQETISGTRIVRAFCMEAHENQRFARENEKLMHLALKSVSINALSSPFMEFLGGIGIAAIIFYGGYQVIKGSSTPGTFFSFLTALIMLYEPVKRLTNVNNTIQQGIAGAQRVFSIIDLVPDIVDRDEAVELPRISEKIEIRNISFAYDDTPVLRNINLTIRAGEVVAFVGMSGGGKTTLVNLIPRFYDVTAGQILIDGHDIRDVSLISLRRQIGIVTQQTILFNDTVRNNIAYGSQGCSEKEIIEAARAANAHDFIVNLPEGYDTVIGELGTKLSGGERQRISIARALLKNAPILILDEATSSLDTEAEMEVQEALERLMKGRTTLVIAHRLSTIRNADRIVVLVKGEIVEEGAHETLLARRGEYYKLHQLQFKEDKVGEEVGRNDS</sequence>
<reference key="1">
    <citation type="journal article" date="2007" name="Proc. Natl. Acad. Sci. U.S.A.">
        <title>The genome of Syntrophus aciditrophicus: life at the thermodynamic limit of microbial growth.</title>
        <authorList>
            <person name="McInerney M.J."/>
            <person name="Rohlin L."/>
            <person name="Mouttaki H."/>
            <person name="Kim U."/>
            <person name="Krupp R.S."/>
            <person name="Rios-Hernandez L."/>
            <person name="Sieber J."/>
            <person name="Struchtemeyer C.G."/>
            <person name="Bhattacharyya A."/>
            <person name="Campbell J.W."/>
            <person name="Gunsalus R.P."/>
        </authorList>
    </citation>
    <scope>NUCLEOTIDE SEQUENCE [LARGE SCALE GENOMIC DNA]</scope>
    <source>
        <strain>SB</strain>
    </source>
</reference>
<evidence type="ECO:0000255" key="1">
    <source>
        <dbReference type="HAMAP-Rule" id="MF_01703"/>
    </source>
</evidence>
<feature type="chain" id="PRO_0000271660" description="ATP-dependent lipid A-core flippase">
    <location>
        <begin position="1"/>
        <end position="601"/>
    </location>
</feature>
<feature type="transmembrane region" description="Helical" evidence="1">
    <location>
        <begin position="35"/>
        <end position="55"/>
    </location>
</feature>
<feature type="transmembrane region" description="Helical" evidence="1">
    <location>
        <begin position="77"/>
        <end position="97"/>
    </location>
</feature>
<feature type="transmembrane region" description="Helical" evidence="1">
    <location>
        <begin position="150"/>
        <end position="170"/>
    </location>
</feature>
<feature type="transmembrane region" description="Helical" evidence="1">
    <location>
        <begin position="173"/>
        <end position="193"/>
    </location>
</feature>
<feature type="transmembrane region" description="Helical" evidence="1">
    <location>
        <begin position="263"/>
        <end position="283"/>
    </location>
</feature>
<feature type="transmembrane region" description="Helical" evidence="1">
    <location>
        <begin position="286"/>
        <end position="306"/>
    </location>
</feature>
<feature type="domain" description="ABC transmembrane type-1" evidence="1">
    <location>
        <begin position="36"/>
        <end position="318"/>
    </location>
</feature>
<feature type="domain" description="ABC transporter" evidence="1">
    <location>
        <begin position="352"/>
        <end position="585"/>
    </location>
</feature>
<feature type="binding site" evidence="1">
    <location>
        <begin position="384"/>
        <end position="391"/>
    </location>
    <ligand>
        <name>ATP</name>
        <dbReference type="ChEBI" id="CHEBI:30616"/>
    </ligand>
</feature>
<accession>Q2LVL0</accession>
<proteinExistence type="inferred from homology"/>
<keyword id="KW-0067">ATP-binding</keyword>
<keyword id="KW-0997">Cell inner membrane</keyword>
<keyword id="KW-1003">Cell membrane</keyword>
<keyword id="KW-0445">Lipid transport</keyword>
<keyword id="KW-0472">Membrane</keyword>
<keyword id="KW-0547">Nucleotide-binding</keyword>
<keyword id="KW-1185">Reference proteome</keyword>
<keyword id="KW-1278">Translocase</keyword>
<keyword id="KW-0812">Transmembrane</keyword>
<keyword id="KW-1133">Transmembrane helix</keyword>
<keyword id="KW-0813">Transport</keyword>